<organism>
    <name type="scientific">Bos taurus</name>
    <name type="common">Bovine</name>
    <dbReference type="NCBI Taxonomy" id="9913"/>
    <lineage>
        <taxon>Eukaryota</taxon>
        <taxon>Metazoa</taxon>
        <taxon>Chordata</taxon>
        <taxon>Craniata</taxon>
        <taxon>Vertebrata</taxon>
        <taxon>Euteleostomi</taxon>
        <taxon>Mammalia</taxon>
        <taxon>Eutheria</taxon>
        <taxon>Laurasiatheria</taxon>
        <taxon>Artiodactyla</taxon>
        <taxon>Ruminantia</taxon>
        <taxon>Pecora</taxon>
        <taxon>Bovidae</taxon>
        <taxon>Bovinae</taxon>
        <taxon>Bos</taxon>
    </lineage>
</organism>
<sequence length="548" mass="63931">MAKFMTPVIQDNPSGWGPCAVPEQFRDMPYQPFSKGDRLGKVADWTGATYQDKRYTNKYSSQFGGGSQYAYFHEEDETSFQLVDTARTQKTAYQRNRMRFAQRNLRRDKDRRNMLQFNLQTLPKSAKQKERERIRLQKKFQKQFGVRQKWDQKSQKPRDSSVEVRSDWEVKEEMDFPQLMKMRYLEVSEPQDIECCGALEYYDKAFDRITTRSEKPLRSIKRIFHTVTTTDDPVIRKLAKTQGNVFATDAILATLMSCTRSVYSWDIVVQRVGSKLFFDKRDNSDFDLLTVSETANEPPQDEGNSFNSPRNLAMEATYINHNFSQQCLRMGKERYNFPNPNPFVEDDMDKNEIASVAYRYRRWKLGDDIDLIVRCEHDGVMTGANGEVSFINIKTLNEWDSRHCNGVDWRQKLDSQRGAVIATELKNNSYKLARWTCCALLAGSEYLKLGYVSRYHVKDSSRHVILGTQQFKPNEFASQINLSVENAWGILRCVIDICMKLEEGKYLILKDPNKQVIRVYSLPDGTFSSDEDDEEEEEEEEEEEEEEA</sequence>
<evidence type="ECO:0000250" key="1">
    <source>
        <dbReference type="UniProtKB" id="K7IM66"/>
    </source>
</evidence>
<evidence type="ECO:0000250" key="2">
    <source>
        <dbReference type="UniProtKB" id="O15371"/>
    </source>
</evidence>
<evidence type="ECO:0000250" key="3">
    <source>
        <dbReference type="UniProtKB" id="O70194"/>
    </source>
</evidence>
<evidence type="ECO:0000255" key="4">
    <source>
        <dbReference type="HAMAP-Rule" id="MF_03003"/>
    </source>
</evidence>
<evidence type="ECO:0000256" key="5">
    <source>
        <dbReference type="SAM" id="MobiDB-lite"/>
    </source>
</evidence>
<feature type="chain" id="PRO_0000245863" description="Eukaryotic translation initiation factor 3 subunit D">
    <location>
        <begin position="1"/>
        <end position="548"/>
    </location>
</feature>
<feature type="region of interest" description="RNA gate" evidence="1">
    <location>
        <begin position="285"/>
        <end position="299"/>
    </location>
</feature>
<feature type="region of interest" description="Disordered" evidence="5">
    <location>
        <begin position="523"/>
        <end position="548"/>
    </location>
</feature>
<feature type="compositionally biased region" description="Acidic residues" evidence="5">
    <location>
        <begin position="529"/>
        <end position="548"/>
    </location>
</feature>
<feature type="modified residue" description="N6-acetyllysine" evidence="3">
    <location>
        <position position="53"/>
    </location>
</feature>
<feature type="modified residue" description="Phosphoserine" evidence="2">
    <location>
        <position position="161"/>
    </location>
</feature>
<feature type="modified residue" description="Phosphoserine" evidence="2">
    <location>
        <position position="528"/>
    </location>
</feature>
<feature type="modified residue" description="Phosphoserine" evidence="2">
    <location>
        <position position="529"/>
    </location>
</feature>
<dbReference type="EMBL" id="BC102156">
    <property type="protein sequence ID" value="AAI02157.1"/>
    <property type="molecule type" value="mRNA"/>
</dbReference>
<dbReference type="RefSeq" id="NP_001029656.1">
    <property type="nucleotide sequence ID" value="NM_001034484.2"/>
</dbReference>
<dbReference type="SMR" id="Q3T122"/>
<dbReference type="FunCoup" id="Q3T122">
    <property type="interactions" value="4828"/>
</dbReference>
<dbReference type="STRING" id="9913.ENSBTAP00000037804"/>
<dbReference type="PaxDb" id="9913-ENSBTAP00000037804"/>
<dbReference type="Ensembl" id="ENSBTAT00000037985.4">
    <property type="protein sequence ID" value="ENSBTAP00000037804.2"/>
    <property type="gene ID" value="ENSBTAG00000001988.5"/>
</dbReference>
<dbReference type="GeneID" id="515226"/>
<dbReference type="KEGG" id="bta:515226"/>
<dbReference type="CTD" id="8664"/>
<dbReference type="VEuPathDB" id="HostDB:ENSBTAG00000001988"/>
<dbReference type="VGNC" id="VGNC:28394">
    <property type="gene designation" value="EIF3D"/>
</dbReference>
<dbReference type="eggNOG" id="KOG2479">
    <property type="taxonomic scope" value="Eukaryota"/>
</dbReference>
<dbReference type="GeneTree" id="ENSGT00390000002667"/>
<dbReference type="HOGENOM" id="CLU_024521_2_0_1"/>
<dbReference type="InParanoid" id="Q3T122"/>
<dbReference type="OMA" id="FMDKRDN"/>
<dbReference type="OrthoDB" id="16538at2759"/>
<dbReference type="TreeFam" id="TF101519"/>
<dbReference type="Reactome" id="R-BTA-156827">
    <property type="pathway name" value="L13a-mediated translational silencing of Ceruloplasmin expression"/>
</dbReference>
<dbReference type="Reactome" id="R-BTA-72649">
    <property type="pathway name" value="Translation initiation complex formation"/>
</dbReference>
<dbReference type="Reactome" id="R-BTA-72689">
    <property type="pathway name" value="Formation of a pool of free 40S subunits"/>
</dbReference>
<dbReference type="Reactome" id="R-BTA-72695">
    <property type="pathway name" value="Formation of the ternary complex, and subsequently, the 43S complex"/>
</dbReference>
<dbReference type="Reactome" id="R-BTA-72702">
    <property type="pathway name" value="Ribosomal scanning and start codon recognition"/>
</dbReference>
<dbReference type="Proteomes" id="UP000009136">
    <property type="component" value="Chromosome 5"/>
</dbReference>
<dbReference type="Bgee" id="ENSBTAG00000001988">
    <property type="expression patterns" value="Expressed in spermatid and 110 other cell types or tissues"/>
</dbReference>
<dbReference type="GO" id="GO:0016282">
    <property type="term" value="C:eukaryotic 43S preinitiation complex"/>
    <property type="evidence" value="ECO:0007669"/>
    <property type="project" value="UniProtKB-UniRule"/>
</dbReference>
<dbReference type="GO" id="GO:0033290">
    <property type="term" value="C:eukaryotic 48S preinitiation complex"/>
    <property type="evidence" value="ECO:0007669"/>
    <property type="project" value="UniProtKB-UniRule"/>
</dbReference>
<dbReference type="GO" id="GO:0005852">
    <property type="term" value="C:eukaryotic translation initiation factor 3 complex"/>
    <property type="evidence" value="ECO:0000250"/>
    <property type="project" value="UniProtKB"/>
</dbReference>
<dbReference type="GO" id="GO:0071541">
    <property type="term" value="C:eukaryotic translation initiation factor 3 complex, eIF3m"/>
    <property type="evidence" value="ECO:0007669"/>
    <property type="project" value="Ensembl"/>
</dbReference>
<dbReference type="GO" id="GO:0045202">
    <property type="term" value="C:synapse"/>
    <property type="evidence" value="ECO:0007669"/>
    <property type="project" value="Ensembl"/>
</dbReference>
<dbReference type="GO" id="GO:0098808">
    <property type="term" value="F:mRNA cap binding"/>
    <property type="evidence" value="ECO:0000250"/>
    <property type="project" value="UniProtKB"/>
</dbReference>
<dbReference type="GO" id="GO:0003723">
    <property type="term" value="F:RNA binding"/>
    <property type="evidence" value="ECO:0000250"/>
    <property type="project" value="UniProtKB"/>
</dbReference>
<dbReference type="GO" id="GO:0003743">
    <property type="term" value="F:translation initiation factor activity"/>
    <property type="evidence" value="ECO:0000318"/>
    <property type="project" value="GO_Central"/>
</dbReference>
<dbReference type="GO" id="GO:0002191">
    <property type="term" value="P:cap-dependent translational initiation"/>
    <property type="evidence" value="ECO:0000250"/>
    <property type="project" value="UniProtKB"/>
</dbReference>
<dbReference type="GO" id="GO:0001732">
    <property type="term" value="P:formation of cytoplasmic translation initiation complex"/>
    <property type="evidence" value="ECO:0007669"/>
    <property type="project" value="UniProtKB-UniRule"/>
</dbReference>
<dbReference type="GO" id="GO:0075522">
    <property type="term" value="P:IRES-dependent viral translational initiation"/>
    <property type="evidence" value="ECO:0007669"/>
    <property type="project" value="Ensembl"/>
</dbReference>
<dbReference type="GO" id="GO:0006413">
    <property type="term" value="P:translational initiation"/>
    <property type="evidence" value="ECO:0000250"/>
    <property type="project" value="UniProtKB"/>
</dbReference>
<dbReference type="GO" id="GO:0075525">
    <property type="term" value="P:viral translational termination-reinitiation"/>
    <property type="evidence" value="ECO:0007669"/>
    <property type="project" value="Ensembl"/>
</dbReference>
<dbReference type="HAMAP" id="MF_03003">
    <property type="entry name" value="eIF3d"/>
    <property type="match status" value="1"/>
</dbReference>
<dbReference type="InterPro" id="IPR007783">
    <property type="entry name" value="eIF3d"/>
</dbReference>
<dbReference type="PANTHER" id="PTHR12399">
    <property type="entry name" value="EUKARYOTIC TRANSLATION INITIATION FACTOR 3 SUBUNIT 7"/>
    <property type="match status" value="1"/>
</dbReference>
<dbReference type="PANTHER" id="PTHR12399:SF0">
    <property type="entry name" value="EUKARYOTIC TRANSLATION INITIATION FACTOR 3 SUBUNIT D"/>
    <property type="match status" value="1"/>
</dbReference>
<dbReference type="Pfam" id="PF05091">
    <property type="entry name" value="eIF-3_zeta"/>
    <property type="match status" value="1"/>
</dbReference>
<dbReference type="PIRSF" id="PIRSF016281">
    <property type="entry name" value="EIF-3_zeta"/>
    <property type="match status" value="1"/>
</dbReference>
<reference key="1">
    <citation type="submission" date="2005-08" db="EMBL/GenBank/DDBJ databases">
        <authorList>
            <consortium name="NIH - Mammalian Gene Collection (MGC) project"/>
        </authorList>
    </citation>
    <scope>NUCLEOTIDE SEQUENCE [LARGE SCALE MRNA]</scope>
    <source>
        <strain>Crossbred X Angus</strain>
        <tissue>Ileum</tissue>
    </source>
</reference>
<accession>Q3T122</accession>
<gene>
    <name evidence="4" type="primary">EIF3D</name>
    <name evidence="4" type="synonym">EIF3S7</name>
</gene>
<comment type="function">
    <text evidence="4">mRNA cap-binding component of the eukaryotic translation initiation factor 3 (eIF-3) complex, a complex required for several steps in the initiation of protein synthesis of a specialized repertoire of mRNAs. The eIF-3 complex associates with the 40S ribosome and facilitates the recruitment of eIF-1, eIF-1A, eIF-2:GTP:methionyl-tRNAi and eIF-5 to form the 43S pre-initiation complex (43S PIC). The eIF-3 complex stimulates mRNA recruitment to the 43S PIC and scanning of the mRNA for AUG recognition. The eIF-3 complex is also required for disassembly and recycling of post-termination ribosomal complexes and subsequently prevents premature joining of the 40S and 60S ribosomal subunits prior to initiation. The eIF-3 complex specifically targets and initiates translation of a subset of mRNAs involved in cell proliferation, including cell cycling, differentiation and apoptosis, and uses different modes of RNA stem-loop binding to exert either translational activation or repression. In the eIF-3 complex, EIF3D specifically recognizes and binds the 7-methylguanosine cap of a subset of mRNAs.</text>
</comment>
<comment type="subunit">
    <text evidence="4">Component of the eukaryotic translation initiation factor 3 (eIF-3) complex, which is composed of 13 subunits: EIF3A, EIF3B, EIF3C, EIF3D, EIF3E, EIF3F, EIF3G, EIF3H, EIF3I, EIF3J, EIF3K, EIF3L and EIF3M. The eIF-3 complex appears to include 3 stable modules: module A is composed of EIF3A, EIF3B, EIF3G and EIF3I; module B is composed of EIF3F, EIF3H, and EIF3M; and module C is composed of EIF3C, EIF3D, EIF3E, EIF3K and EIF3L. EIF3C of module C binds EIF3B of module A and EIF3H of module B, thereby linking the three modules. EIF3J is a labile subunit that binds to the eIF-3 complex via EIF3B. The eIF-3 complex interacts with RPS6KB1 under conditions of nutrient depletion. Mitogenic stimulation leads to binding and activation of a complex composed of MTOR and RPTOR, leading to phosphorylation and release of RPS6KB1 and binding of EIF4B to eIF-3.</text>
</comment>
<comment type="subcellular location">
    <subcellularLocation>
        <location evidence="4">Cytoplasm</location>
    </subcellularLocation>
</comment>
<comment type="domain">
    <text evidence="4">The RNA gate region regulates mRNA cap recognition to prevent promiscuous mRNA-binding before assembly of eif3d into the full eukaryotic translation initiation factor 3 (eIF-3) complex.</text>
</comment>
<comment type="similarity">
    <text evidence="4">Belongs to the eIF-3 subunit D family.</text>
</comment>
<proteinExistence type="evidence at transcript level"/>
<protein>
    <recommendedName>
        <fullName evidence="4">Eukaryotic translation initiation factor 3 subunit D</fullName>
        <shortName evidence="4">eIF3d</shortName>
    </recommendedName>
    <alternativeName>
        <fullName evidence="4">Eukaryotic translation initiation factor 3 subunit 7</fullName>
    </alternativeName>
    <alternativeName>
        <fullName evidence="4">eIF-3-zeta</fullName>
    </alternativeName>
</protein>
<keyword id="KW-0007">Acetylation</keyword>
<keyword id="KW-0963">Cytoplasm</keyword>
<keyword id="KW-0396">Initiation factor</keyword>
<keyword id="KW-0597">Phosphoprotein</keyword>
<keyword id="KW-0648">Protein biosynthesis</keyword>
<keyword id="KW-1185">Reference proteome</keyword>
<keyword id="KW-0694">RNA-binding</keyword>
<name>EIF3D_BOVIN</name>